<organism>
    <name type="scientific">Brucella abortus (strain 2308)</name>
    <dbReference type="NCBI Taxonomy" id="359391"/>
    <lineage>
        <taxon>Bacteria</taxon>
        <taxon>Pseudomonadati</taxon>
        <taxon>Pseudomonadota</taxon>
        <taxon>Alphaproteobacteria</taxon>
        <taxon>Hyphomicrobiales</taxon>
        <taxon>Brucellaceae</taxon>
        <taxon>Brucella/Ochrobactrum group</taxon>
        <taxon>Brucella</taxon>
    </lineage>
</organism>
<accession>Q2YKR3</accession>
<proteinExistence type="inferred from homology"/>
<reference key="1">
    <citation type="journal article" date="2005" name="Infect. Immun.">
        <title>Whole-genome analyses of speciation events in pathogenic Brucellae.</title>
        <authorList>
            <person name="Chain P.S."/>
            <person name="Comerci D.J."/>
            <person name="Tolmasky M.E."/>
            <person name="Larimer F.W."/>
            <person name="Malfatti S.A."/>
            <person name="Vergez L.M."/>
            <person name="Aguero F."/>
            <person name="Land M.L."/>
            <person name="Ugalde R.A."/>
            <person name="Garcia E."/>
        </authorList>
    </citation>
    <scope>NUCLEOTIDE SEQUENCE [LARGE SCALE GENOMIC DNA]</scope>
    <source>
        <strain>2308</strain>
    </source>
</reference>
<gene>
    <name evidence="1" type="primary">ade</name>
    <name type="ordered locus">BAB2_0587</name>
</gene>
<evidence type="ECO:0000255" key="1">
    <source>
        <dbReference type="HAMAP-Rule" id="MF_01518"/>
    </source>
</evidence>
<feature type="chain" id="PRO_0000296719" description="Adenine deaminase">
    <location>
        <begin position="1"/>
        <end position="581"/>
    </location>
</feature>
<name>ADEC_BRUA2</name>
<dbReference type="EC" id="3.5.4.2" evidence="1"/>
<dbReference type="EMBL" id="AM040265">
    <property type="protein sequence ID" value="CAJ12753.1"/>
    <property type="molecule type" value="Genomic_DNA"/>
</dbReference>
<dbReference type="SMR" id="Q2YKR3"/>
<dbReference type="STRING" id="359391.BAB2_0587"/>
<dbReference type="KEGG" id="bmf:BAB2_0587"/>
<dbReference type="HOGENOM" id="CLU_027935_0_0_5"/>
<dbReference type="Proteomes" id="UP000002719">
    <property type="component" value="Chromosome II"/>
</dbReference>
<dbReference type="GO" id="GO:0000034">
    <property type="term" value="F:adenine deaminase activity"/>
    <property type="evidence" value="ECO:0007669"/>
    <property type="project" value="UniProtKB-UniRule"/>
</dbReference>
<dbReference type="GO" id="GO:0006146">
    <property type="term" value="P:adenine catabolic process"/>
    <property type="evidence" value="ECO:0007669"/>
    <property type="project" value="InterPro"/>
</dbReference>
<dbReference type="CDD" id="cd01295">
    <property type="entry name" value="AdeC"/>
    <property type="match status" value="1"/>
</dbReference>
<dbReference type="Gene3D" id="3.20.20.140">
    <property type="entry name" value="Metal-dependent hydrolases"/>
    <property type="match status" value="1"/>
</dbReference>
<dbReference type="Gene3D" id="2.30.40.10">
    <property type="entry name" value="Urease, subunit C, domain 1"/>
    <property type="match status" value="1"/>
</dbReference>
<dbReference type="HAMAP" id="MF_01518">
    <property type="entry name" value="Adenine_deamin"/>
    <property type="match status" value="1"/>
</dbReference>
<dbReference type="InterPro" id="IPR006679">
    <property type="entry name" value="Adenine_deam"/>
</dbReference>
<dbReference type="InterPro" id="IPR026912">
    <property type="entry name" value="Adenine_deam_C"/>
</dbReference>
<dbReference type="InterPro" id="IPR006680">
    <property type="entry name" value="Amidohydro-rel"/>
</dbReference>
<dbReference type="InterPro" id="IPR011059">
    <property type="entry name" value="Metal-dep_hydrolase_composite"/>
</dbReference>
<dbReference type="InterPro" id="IPR032466">
    <property type="entry name" value="Metal_Hydrolase"/>
</dbReference>
<dbReference type="NCBIfam" id="TIGR01178">
    <property type="entry name" value="ade"/>
    <property type="match status" value="1"/>
</dbReference>
<dbReference type="PANTHER" id="PTHR11113:SF2">
    <property type="entry name" value="ADENINE DEAMINASE"/>
    <property type="match status" value="1"/>
</dbReference>
<dbReference type="PANTHER" id="PTHR11113">
    <property type="entry name" value="N-ACETYLGLUCOSAMINE-6-PHOSPHATE DEACETYLASE"/>
    <property type="match status" value="1"/>
</dbReference>
<dbReference type="Pfam" id="PF13382">
    <property type="entry name" value="Adenine_deam_C"/>
    <property type="match status" value="1"/>
</dbReference>
<dbReference type="Pfam" id="PF01979">
    <property type="entry name" value="Amidohydro_1"/>
    <property type="match status" value="1"/>
</dbReference>
<dbReference type="SUPFAM" id="SSF51338">
    <property type="entry name" value="Composite domain of metallo-dependent hydrolases"/>
    <property type="match status" value="1"/>
</dbReference>
<dbReference type="SUPFAM" id="SSF51556">
    <property type="entry name" value="Metallo-dependent hydrolases"/>
    <property type="match status" value="1"/>
</dbReference>
<keyword id="KW-0378">Hydrolase</keyword>
<keyword id="KW-0464">Manganese</keyword>
<keyword id="KW-1185">Reference proteome</keyword>
<comment type="catalytic activity">
    <reaction evidence="1">
        <text>adenine + H2O + H(+) = hypoxanthine + NH4(+)</text>
        <dbReference type="Rhea" id="RHEA:23688"/>
        <dbReference type="ChEBI" id="CHEBI:15377"/>
        <dbReference type="ChEBI" id="CHEBI:15378"/>
        <dbReference type="ChEBI" id="CHEBI:16708"/>
        <dbReference type="ChEBI" id="CHEBI:17368"/>
        <dbReference type="ChEBI" id="CHEBI:28938"/>
        <dbReference type="EC" id="3.5.4.2"/>
    </reaction>
</comment>
<comment type="cofactor">
    <cofactor evidence="1">
        <name>Mn(2+)</name>
        <dbReference type="ChEBI" id="CHEBI:29035"/>
    </cofactor>
</comment>
<comment type="similarity">
    <text evidence="1">Belongs to the metallo-dependent hydrolases superfamily. Adenine deaminase family.</text>
</comment>
<sequence length="581" mass="62688">MRHCDSFCELIPMKGCEAMLEWMIDQGAGREPADIVLKGGRFLDLITGELVESDIAICEDRIVGTFGTYRGKHEIDVSGRIVVPGFIDTHLHIASSQVTPHEFDRCVLPQGVTTAICDPHEIANVLGAEGIRFFLDSALETVMDIRVQLSSCVPATHMETSGAELLIDDLLPFADHPKVIGLAEFMNFPGVLAKDPECMAKLRAFQGRHIDGHAPLLRGLDLNGYIAAGIRTEHEATNAEEALEKLRKGMYVLVREGSVSKDLKALMPIITERHAQFLALCTDDRNPLDIADQGHLDYLIRTAIAGGVEPLAIYRAASVSAARVFGLFDRGLVAPGQRADLVVVDSLEGCHAEIVLSAGRVVSEALFAARKPVAEVGRNSVKAPRVTASNFRSQSNSGKTRAIGIVPGKIITQNLEFDLKVGPNGVEPDLERDVVKVAVIERHGKNGNIATGFVHGFGLKAGAIASTVSHDSHNICVVGASDEDIATAANRLGEIEGGFVVVRDGKVLAEMPLPIAGLMSTEPYETVREALRKLRHAAEDLGSVLEEPFLQLAFIALPVIPHLKITDRGLVDVDKFEFVGN</sequence>
<protein>
    <recommendedName>
        <fullName evidence="1">Adenine deaminase</fullName>
        <shortName evidence="1">Adenase</shortName>
        <shortName evidence="1">Adenine aminase</shortName>
        <ecNumber evidence="1">3.5.4.2</ecNumber>
    </recommendedName>
</protein>